<gene>
    <name evidence="1" type="primary">ispF</name>
    <name type="ordered locus">Gmet_0059</name>
</gene>
<sequence length="157" mass="16890">MRIGHGYDVHCLVEGRKLILGGVDVPYERGLLGHSDADVLLHAIADAILGALALGDIGKHFPDTDPQFKGADSRKLLRHVMALAGQKGYVLGNVDATIVAQRPKLAPFIPEMRANLAEDLIAEIDRINVKATTTEQLGFAGRGEGIAAYAVVLMERR</sequence>
<keyword id="KW-0414">Isoprene biosynthesis</keyword>
<keyword id="KW-0456">Lyase</keyword>
<keyword id="KW-0479">Metal-binding</keyword>
<keyword id="KW-1185">Reference proteome</keyword>
<evidence type="ECO:0000255" key="1">
    <source>
        <dbReference type="HAMAP-Rule" id="MF_00107"/>
    </source>
</evidence>
<organism>
    <name type="scientific">Geobacter metallireducens (strain ATCC 53774 / DSM 7210 / GS-15)</name>
    <dbReference type="NCBI Taxonomy" id="269799"/>
    <lineage>
        <taxon>Bacteria</taxon>
        <taxon>Pseudomonadati</taxon>
        <taxon>Thermodesulfobacteriota</taxon>
        <taxon>Desulfuromonadia</taxon>
        <taxon>Geobacterales</taxon>
        <taxon>Geobacteraceae</taxon>
        <taxon>Geobacter</taxon>
    </lineage>
</organism>
<proteinExistence type="inferred from homology"/>
<dbReference type="EC" id="4.6.1.12" evidence="1"/>
<dbReference type="EMBL" id="CP000148">
    <property type="protein sequence ID" value="ABB30308.1"/>
    <property type="molecule type" value="Genomic_DNA"/>
</dbReference>
<dbReference type="RefSeq" id="WP_004514183.1">
    <property type="nucleotide sequence ID" value="NC_007517.1"/>
</dbReference>
<dbReference type="SMR" id="Q39ZL6"/>
<dbReference type="STRING" id="269799.Gmet_0059"/>
<dbReference type="KEGG" id="gme:Gmet_0059"/>
<dbReference type="eggNOG" id="COG0245">
    <property type="taxonomic scope" value="Bacteria"/>
</dbReference>
<dbReference type="HOGENOM" id="CLU_084630_2_0_7"/>
<dbReference type="UniPathway" id="UPA00056">
    <property type="reaction ID" value="UER00095"/>
</dbReference>
<dbReference type="Proteomes" id="UP000007073">
    <property type="component" value="Chromosome"/>
</dbReference>
<dbReference type="GO" id="GO:0008685">
    <property type="term" value="F:2-C-methyl-D-erythritol 2,4-cyclodiphosphate synthase activity"/>
    <property type="evidence" value="ECO:0007669"/>
    <property type="project" value="UniProtKB-UniRule"/>
</dbReference>
<dbReference type="GO" id="GO:0046872">
    <property type="term" value="F:metal ion binding"/>
    <property type="evidence" value="ECO:0007669"/>
    <property type="project" value="UniProtKB-KW"/>
</dbReference>
<dbReference type="GO" id="GO:0019288">
    <property type="term" value="P:isopentenyl diphosphate biosynthetic process, methylerythritol 4-phosphate pathway"/>
    <property type="evidence" value="ECO:0007669"/>
    <property type="project" value="UniProtKB-UniRule"/>
</dbReference>
<dbReference type="GO" id="GO:0016114">
    <property type="term" value="P:terpenoid biosynthetic process"/>
    <property type="evidence" value="ECO:0007669"/>
    <property type="project" value="InterPro"/>
</dbReference>
<dbReference type="CDD" id="cd00554">
    <property type="entry name" value="MECDP_synthase"/>
    <property type="match status" value="1"/>
</dbReference>
<dbReference type="FunFam" id="3.30.1330.50:FF:000001">
    <property type="entry name" value="2-C-methyl-D-erythritol 2,4-cyclodiphosphate synthase"/>
    <property type="match status" value="1"/>
</dbReference>
<dbReference type="Gene3D" id="3.30.1330.50">
    <property type="entry name" value="2-C-methyl-D-erythritol 2,4-cyclodiphosphate synthase"/>
    <property type="match status" value="1"/>
</dbReference>
<dbReference type="HAMAP" id="MF_00107">
    <property type="entry name" value="IspF"/>
    <property type="match status" value="1"/>
</dbReference>
<dbReference type="InterPro" id="IPR003526">
    <property type="entry name" value="MECDP_synthase"/>
</dbReference>
<dbReference type="InterPro" id="IPR020555">
    <property type="entry name" value="MECDP_synthase_CS"/>
</dbReference>
<dbReference type="InterPro" id="IPR036571">
    <property type="entry name" value="MECDP_synthase_sf"/>
</dbReference>
<dbReference type="NCBIfam" id="TIGR00151">
    <property type="entry name" value="ispF"/>
    <property type="match status" value="1"/>
</dbReference>
<dbReference type="PANTHER" id="PTHR43181">
    <property type="entry name" value="2-C-METHYL-D-ERYTHRITOL 2,4-CYCLODIPHOSPHATE SYNTHASE, CHLOROPLASTIC"/>
    <property type="match status" value="1"/>
</dbReference>
<dbReference type="PANTHER" id="PTHR43181:SF1">
    <property type="entry name" value="2-C-METHYL-D-ERYTHRITOL 2,4-CYCLODIPHOSPHATE SYNTHASE, CHLOROPLASTIC"/>
    <property type="match status" value="1"/>
</dbReference>
<dbReference type="Pfam" id="PF02542">
    <property type="entry name" value="YgbB"/>
    <property type="match status" value="1"/>
</dbReference>
<dbReference type="SUPFAM" id="SSF69765">
    <property type="entry name" value="IpsF-like"/>
    <property type="match status" value="1"/>
</dbReference>
<dbReference type="PROSITE" id="PS01350">
    <property type="entry name" value="ISPF"/>
    <property type="match status" value="1"/>
</dbReference>
<comment type="function">
    <text evidence="1">Involved in the biosynthesis of isopentenyl diphosphate (IPP) and dimethylallyl diphosphate (DMAPP), two major building blocks of isoprenoid compounds. Catalyzes the conversion of 4-diphosphocytidyl-2-C-methyl-D-erythritol 2-phosphate (CDP-ME2P) to 2-C-methyl-D-erythritol 2,4-cyclodiphosphate (ME-CPP) with a corresponding release of cytidine 5-monophosphate (CMP).</text>
</comment>
<comment type="catalytic activity">
    <reaction evidence="1">
        <text>4-CDP-2-C-methyl-D-erythritol 2-phosphate = 2-C-methyl-D-erythritol 2,4-cyclic diphosphate + CMP</text>
        <dbReference type="Rhea" id="RHEA:23864"/>
        <dbReference type="ChEBI" id="CHEBI:57919"/>
        <dbReference type="ChEBI" id="CHEBI:58483"/>
        <dbReference type="ChEBI" id="CHEBI:60377"/>
        <dbReference type="EC" id="4.6.1.12"/>
    </reaction>
</comment>
<comment type="cofactor">
    <cofactor evidence="1">
        <name>a divalent metal cation</name>
        <dbReference type="ChEBI" id="CHEBI:60240"/>
    </cofactor>
    <text evidence="1">Binds 1 divalent metal cation per subunit.</text>
</comment>
<comment type="pathway">
    <text evidence="1">Isoprenoid biosynthesis; isopentenyl diphosphate biosynthesis via DXP pathway; isopentenyl diphosphate from 1-deoxy-D-xylulose 5-phosphate: step 4/6.</text>
</comment>
<comment type="subunit">
    <text evidence="1">Homotrimer.</text>
</comment>
<comment type="similarity">
    <text evidence="1">Belongs to the IspF family.</text>
</comment>
<protein>
    <recommendedName>
        <fullName evidence="1">2-C-methyl-D-erythritol 2,4-cyclodiphosphate synthase</fullName>
        <shortName evidence="1">MECDP-synthase</shortName>
        <shortName evidence="1">MECPP-synthase</shortName>
        <shortName evidence="1">MECPS</shortName>
        <ecNumber evidence="1">4.6.1.12</ecNumber>
    </recommendedName>
</protein>
<name>ISPF_GEOMG</name>
<reference key="1">
    <citation type="journal article" date="2009" name="BMC Microbiol.">
        <title>The genome sequence of Geobacter metallireducens: features of metabolism, physiology and regulation common and dissimilar to Geobacter sulfurreducens.</title>
        <authorList>
            <person name="Aklujkar M."/>
            <person name="Krushkal J."/>
            <person name="DiBartolo G."/>
            <person name="Lapidus A."/>
            <person name="Land M.L."/>
            <person name="Lovley D.R."/>
        </authorList>
    </citation>
    <scope>NUCLEOTIDE SEQUENCE [LARGE SCALE GENOMIC DNA]</scope>
    <source>
        <strain>ATCC 53774 / DSM 7210 / GS-15</strain>
    </source>
</reference>
<accession>Q39ZL6</accession>
<feature type="chain" id="PRO_0000237729" description="2-C-methyl-D-erythritol 2,4-cyclodiphosphate synthase">
    <location>
        <begin position="1"/>
        <end position="157"/>
    </location>
</feature>
<feature type="binding site" evidence="1">
    <location>
        <begin position="8"/>
        <end position="10"/>
    </location>
    <ligand>
        <name>4-CDP-2-C-methyl-D-erythritol 2-phosphate</name>
        <dbReference type="ChEBI" id="CHEBI:57919"/>
    </ligand>
</feature>
<feature type="binding site" evidence="1">
    <location>
        <position position="8"/>
    </location>
    <ligand>
        <name>a divalent metal cation</name>
        <dbReference type="ChEBI" id="CHEBI:60240"/>
    </ligand>
</feature>
<feature type="binding site" evidence="1">
    <location>
        <position position="10"/>
    </location>
    <ligand>
        <name>a divalent metal cation</name>
        <dbReference type="ChEBI" id="CHEBI:60240"/>
    </ligand>
</feature>
<feature type="binding site" evidence="1">
    <location>
        <begin position="34"/>
        <end position="35"/>
    </location>
    <ligand>
        <name>4-CDP-2-C-methyl-D-erythritol 2-phosphate</name>
        <dbReference type="ChEBI" id="CHEBI:57919"/>
    </ligand>
</feature>
<feature type="binding site" evidence="1">
    <location>
        <position position="42"/>
    </location>
    <ligand>
        <name>a divalent metal cation</name>
        <dbReference type="ChEBI" id="CHEBI:60240"/>
    </ligand>
</feature>
<feature type="binding site" evidence="1">
    <location>
        <begin position="56"/>
        <end position="58"/>
    </location>
    <ligand>
        <name>4-CDP-2-C-methyl-D-erythritol 2-phosphate</name>
        <dbReference type="ChEBI" id="CHEBI:57919"/>
    </ligand>
</feature>
<feature type="binding site" evidence="1">
    <location>
        <begin position="61"/>
        <end position="65"/>
    </location>
    <ligand>
        <name>4-CDP-2-C-methyl-D-erythritol 2-phosphate</name>
        <dbReference type="ChEBI" id="CHEBI:57919"/>
    </ligand>
</feature>
<feature type="binding site" evidence="1">
    <location>
        <begin position="132"/>
        <end position="135"/>
    </location>
    <ligand>
        <name>4-CDP-2-C-methyl-D-erythritol 2-phosphate</name>
        <dbReference type="ChEBI" id="CHEBI:57919"/>
    </ligand>
</feature>
<feature type="binding site" evidence="1">
    <location>
        <position position="139"/>
    </location>
    <ligand>
        <name>4-CDP-2-C-methyl-D-erythritol 2-phosphate</name>
        <dbReference type="ChEBI" id="CHEBI:57919"/>
    </ligand>
</feature>
<feature type="binding site" evidence="1">
    <location>
        <position position="142"/>
    </location>
    <ligand>
        <name>4-CDP-2-C-methyl-D-erythritol 2-phosphate</name>
        <dbReference type="ChEBI" id="CHEBI:57919"/>
    </ligand>
</feature>
<feature type="site" description="Transition state stabilizer" evidence="1">
    <location>
        <position position="34"/>
    </location>
</feature>
<feature type="site" description="Transition state stabilizer" evidence="1">
    <location>
        <position position="133"/>
    </location>
</feature>